<gene>
    <name type="primary">hbx2</name>
    <name type="ORF">DDB_G0275173</name>
</gene>
<proteinExistence type="evidence at transcript level"/>
<reference key="1">
    <citation type="journal article" date="2002" name="Nature">
        <title>Sequence and analysis of chromosome 2 of Dictyostelium discoideum.</title>
        <authorList>
            <person name="Gloeckner G."/>
            <person name="Eichinger L."/>
            <person name="Szafranski K."/>
            <person name="Pachebat J.A."/>
            <person name="Bankier A.T."/>
            <person name="Dear P.H."/>
            <person name="Lehmann R."/>
            <person name="Baumgart C."/>
            <person name="Parra G."/>
            <person name="Abril J.F."/>
            <person name="Guigo R."/>
            <person name="Kumpf K."/>
            <person name="Tunggal B."/>
            <person name="Cox E.C."/>
            <person name="Quail M.A."/>
            <person name="Platzer M."/>
            <person name="Rosenthal A."/>
            <person name="Noegel A.A."/>
        </authorList>
    </citation>
    <scope>NUCLEOTIDE SEQUENCE [LARGE SCALE GENOMIC DNA]</scope>
    <source>
        <strain>AX4</strain>
    </source>
</reference>
<reference key="2">
    <citation type="journal article" date="2005" name="Nature">
        <title>The genome of the social amoeba Dictyostelium discoideum.</title>
        <authorList>
            <person name="Eichinger L."/>
            <person name="Pachebat J.A."/>
            <person name="Gloeckner G."/>
            <person name="Rajandream M.A."/>
            <person name="Sucgang R."/>
            <person name="Berriman M."/>
            <person name="Song J."/>
            <person name="Olsen R."/>
            <person name="Szafranski K."/>
            <person name="Xu Q."/>
            <person name="Tunggal B."/>
            <person name="Kummerfeld S."/>
            <person name="Madera M."/>
            <person name="Konfortov B.A."/>
            <person name="Rivero F."/>
            <person name="Bankier A.T."/>
            <person name="Lehmann R."/>
            <person name="Hamlin N."/>
            <person name="Davies R."/>
            <person name="Gaudet P."/>
            <person name="Fey P."/>
            <person name="Pilcher K."/>
            <person name="Chen G."/>
            <person name="Saunders D."/>
            <person name="Sodergren E.J."/>
            <person name="Davis P."/>
            <person name="Kerhornou A."/>
            <person name="Nie X."/>
            <person name="Hall N."/>
            <person name="Anjard C."/>
            <person name="Hemphill L."/>
            <person name="Bason N."/>
            <person name="Farbrother P."/>
            <person name="Desany B."/>
            <person name="Just E."/>
            <person name="Morio T."/>
            <person name="Rost R."/>
            <person name="Churcher C.M."/>
            <person name="Cooper J."/>
            <person name="Haydock S."/>
            <person name="van Driessche N."/>
            <person name="Cronin A."/>
            <person name="Goodhead I."/>
            <person name="Muzny D.M."/>
            <person name="Mourier T."/>
            <person name="Pain A."/>
            <person name="Lu M."/>
            <person name="Harper D."/>
            <person name="Lindsay R."/>
            <person name="Hauser H."/>
            <person name="James K.D."/>
            <person name="Quiles M."/>
            <person name="Madan Babu M."/>
            <person name="Saito T."/>
            <person name="Buchrieser C."/>
            <person name="Wardroper A."/>
            <person name="Felder M."/>
            <person name="Thangavelu M."/>
            <person name="Johnson D."/>
            <person name="Knights A."/>
            <person name="Loulseged H."/>
            <person name="Mungall K.L."/>
            <person name="Oliver K."/>
            <person name="Price C."/>
            <person name="Quail M.A."/>
            <person name="Urushihara H."/>
            <person name="Hernandez J."/>
            <person name="Rabbinowitsch E."/>
            <person name="Steffen D."/>
            <person name="Sanders M."/>
            <person name="Ma J."/>
            <person name="Kohara Y."/>
            <person name="Sharp S."/>
            <person name="Simmonds M.N."/>
            <person name="Spiegler S."/>
            <person name="Tivey A."/>
            <person name="Sugano S."/>
            <person name="White B."/>
            <person name="Walker D."/>
            <person name="Woodward J.R."/>
            <person name="Winckler T."/>
            <person name="Tanaka Y."/>
            <person name="Shaulsky G."/>
            <person name="Schleicher M."/>
            <person name="Weinstock G.M."/>
            <person name="Rosenthal A."/>
            <person name="Cox E.C."/>
            <person name="Chisholm R.L."/>
            <person name="Gibbs R.A."/>
            <person name="Loomis W.F."/>
            <person name="Platzer M."/>
            <person name="Kay R.R."/>
            <person name="Williams J.G."/>
            <person name="Dear P.H."/>
            <person name="Noegel A.A."/>
            <person name="Barrell B.G."/>
            <person name="Kuspa A."/>
        </authorList>
    </citation>
    <scope>NUCLEOTIDE SEQUENCE [LARGE SCALE GENOMIC DNA]</scope>
    <source>
        <strain>AX4</strain>
    </source>
</reference>
<reference key="3">
    <citation type="journal article" date="1998" name="Development">
        <title>The homeobox-containing gene Wariai regulates anterior-posterior patterning and cell-type homeostasis in Dictyostelium.</title>
        <authorList>
            <person name="Han Z."/>
            <person name="Firtel R.A."/>
        </authorList>
    </citation>
    <scope>NUCLEOTIDE SEQUENCE [MRNA] OF 409-942</scope>
    <scope>DEVELOPMENTAL STAGE</scope>
    <scope>DISRUPTION PHENOTYPE</scope>
    <scope>FUNCTION</scope>
    <source>
        <strain>AX3-1</strain>
    </source>
</reference>
<comment type="function">
    <text evidence="4">Putative transcription factor that may potentiate the function of warA.</text>
</comment>
<comment type="subcellular location">
    <subcellularLocation>
        <location evidence="2">Nucleus</location>
    </subcellularLocation>
</comment>
<comment type="developmental stage">
    <text evidence="4">Developmentally regulated and preferentially expressed starting at the mound stage in response to cAMP. Expression seems to require the transcription factor gbfA.</text>
</comment>
<comment type="disruption phenotype">
    <text evidence="4">No visible phenotype. Hbx2 and warA double mutants form fruiting bodies with an enlarged basal disk and lower portion of the stalk and the anterior of slugs is not as cylindrical as that of wild-type slugs.</text>
</comment>
<comment type="sequence caution" evidence="5">
    <conflict type="erroneous gene model prediction">
        <sequence resource="EMBL-CDS" id="AAB92246"/>
    </conflict>
</comment>
<name>HBX2_DICDI</name>
<feature type="chain" id="PRO_0000388786" description="Homeobox protein 2">
    <location>
        <begin position="1"/>
        <end position="942"/>
    </location>
</feature>
<feature type="DNA-binding region" description="Homeobox" evidence="2">
    <location>
        <begin position="485"/>
        <end position="544"/>
    </location>
</feature>
<feature type="region of interest" description="Disordered" evidence="3">
    <location>
        <begin position="32"/>
        <end position="149"/>
    </location>
</feature>
<feature type="region of interest" description="Disordered" evidence="3">
    <location>
        <begin position="161"/>
        <end position="494"/>
    </location>
</feature>
<feature type="region of interest" description="Disordered" evidence="3">
    <location>
        <begin position="537"/>
        <end position="580"/>
    </location>
</feature>
<feature type="region of interest" description="Disordered" evidence="3">
    <location>
        <begin position="609"/>
        <end position="942"/>
    </location>
</feature>
<feature type="coiled-coil region" evidence="1">
    <location>
        <begin position="835"/>
        <end position="865"/>
    </location>
</feature>
<feature type="compositionally biased region" description="Low complexity" evidence="3">
    <location>
        <begin position="32"/>
        <end position="87"/>
    </location>
</feature>
<feature type="compositionally biased region" description="Low complexity" evidence="3">
    <location>
        <begin position="98"/>
        <end position="130"/>
    </location>
</feature>
<feature type="compositionally biased region" description="Polar residues" evidence="3">
    <location>
        <begin position="131"/>
        <end position="149"/>
    </location>
</feature>
<feature type="compositionally biased region" description="Low complexity" evidence="3">
    <location>
        <begin position="163"/>
        <end position="261"/>
    </location>
</feature>
<feature type="compositionally biased region" description="Polar residues" evidence="3">
    <location>
        <begin position="269"/>
        <end position="290"/>
    </location>
</feature>
<feature type="compositionally biased region" description="Low complexity" evidence="3">
    <location>
        <begin position="299"/>
        <end position="430"/>
    </location>
</feature>
<feature type="compositionally biased region" description="Low complexity" evidence="3">
    <location>
        <begin position="450"/>
        <end position="464"/>
    </location>
</feature>
<feature type="compositionally biased region" description="Polar residues" evidence="3">
    <location>
        <begin position="465"/>
        <end position="481"/>
    </location>
</feature>
<feature type="compositionally biased region" description="Low complexity" evidence="3">
    <location>
        <begin position="609"/>
        <end position="621"/>
    </location>
</feature>
<feature type="compositionally biased region" description="Low complexity" evidence="3">
    <location>
        <begin position="628"/>
        <end position="685"/>
    </location>
</feature>
<feature type="compositionally biased region" description="Low complexity" evidence="3">
    <location>
        <begin position="694"/>
        <end position="737"/>
    </location>
</feature>
<feature type="compositionally biased region" description="Low complexity" evidence="3">
    <location>
        <begin position="752"/>
        <end position="764"/>
    </location>
</feature>
<feature type="compositionally biased region" description="Low complexity" evidence="3">
    <location>
        <begin position="776"/>
        <end position="864"/>
    </location>
</feature>
<feature type="compositionally biased region" description="Low complexity" evidence="3">
    <location>
        <begin position="890"/>
        <end position="927"/>
    </location>
</feature>
<feature type="sequence conflict" description="In Ref. 3; AAB92246." evidence="5" ref="3">
    <original>R</original>
    <variation>C</variation>
    <location>
        <position position="932"/>
    </location>
</feature>
<sequence length="942" mass="107111">MNIGSLLHSSMLGKQFQSNQSQQEVVSNNIAECNENNNNNNNNNNNNNNSNNNNNNNNNNNNNNNNNNNNNNDNNNNSNNNKININESSQSITETVRSPYSSPSSSISSPSRSPSPNSPASSSPIHSPIPNTNFKQSGEYQSIPSPQNIHGLNKKVKVDMLESPNSSNSSPSFSSNMSPSSSNSPRHRSNSTSNNKSLLQYQFNQSNQSPSFSPLRNNKNNNNINNNNNNNNNNNNNNNNNNNQSPSMNGSPSSNLSKSNSGIPPLQLQAPSNTSSPQLLSPNHNQQRISPNRYLNGGNNNHNNNNNNNNNNNNNNNNNNNNNNNNHNNHNNNNNNNNNNNNNNNNNNNNNNNNNNNNNNNNNNNNNNNNNNINNNNINNNNHNYNHNQNHNHNHNYNNNNQNNQNNNNDDNFSPSHSPNLSPSNYNSSPTHYGNNNNDTPKRSHASYKNNNNNNNNNNNSNSSFDEYQPQQKVSRSNSPNNDKEKKRRTRLKKEQADILKTFFDNDDYPTKDDKETLANRLGMSYCAVTTWFSNKRQEKKRRGDVAPVQTGGRRVPIDDEDDYENRNGDNSPSRNQGGAIELLKNSSSGLTPILESLNVKQQNNINFFKNNNMDNNNKNVPHLSLSNNNNNNNNNNNNNNNNNNNNNNNNRNRNNNNIYNNNNNNNNNNSNNRGKNFSDSGSSDSDSELNRHNNNNNNNSNNYNNGNSNSNNNRNNNNNYNYNNYINNNNYNNNNNRQHCDDEEEDEQYFNNNNNNNNNNNNNRISDSSDDQYFSDDTNNNNDNYNNGNNNYNNNNNNNNFNNNYMNNYNNNYNNNNYNNNNSYNNSNGNNNFNNNNNNNNQNNNNNNNNNQYNNNNKNYLNNIPSSKKHQLQGNYERRNSLPNSQIQNNFNGDNNNNNNNKNNNNNNQNNNGNGNNNNNNNNDNNIYKRRHSMDDDCQQN</sequence>
<evidence type="ECO:0000255" key="1"/>
<evidence type="ECO:0000255" key="2">
    <source>
        <dbReference type="PROSITE-ProRule" id="PRU00108"/>
    </source>
</evidence>
<evidence type="ECO:0000256" key="3">
    <source>
        <dbReference type="SAM" id="MobiDB-lite"/>
    </source>
</evidence>
<evidence type="ECO:0000269" key="4">
    <source>
    </source>
</evidence>
<evidence type="ECO:0000305" key="5"/>
<accession>Q869W0</accession>
<accession>O43989</accession>
<accession>Q554G5</accession>
<dbReference type="EMBL" id="AAFI02000013">
    <property type="protein sequence ID" value="EAL69867.1"/>
    <property type="molecule type" value="Genomic_DNA"/>
</dbReference>
<dbReference type="EMBL" id="AF036171">
    <property type="protein sequence ID" value="AAB92246.1"/>
    <property type="status" value="ALT_SEQ"/>
    <property type="molecule type" value="mRNA"/>
</dbReference>
<dbReference type="RefSeq" id="XP_643746.1">
    <property type="nucleotide sequence ID" value="XM_638654.1"/>
</dbReference>
<dbReference type="SMR" id="Q869W0"/>
<dbReference type="STRING" id="44689.Q869W0"/>
<dbReference type="PaxDb" id="44689-DDB0185105"/>
<dbReference type="EnsemblProtists" id="EAL69867">
    <property type="protein sequence ID" value="EAL69867"/>
    <property type="gene ID" value="DDB_G0275173"/>
</dbReference>
<dbReference type="GeneID" id="8619790"/>
<dbReference type="KEGG" id="ddi:DDB_G0275173"/>
<dbReference type="dictyBase" id="DDB_G0275173">
    <property type="gene designation" value="hbx2"/>
</dbReference>
<dbReference type="VEuPathDB" id="AmoebaDB:DDB_G0275173"/>
<dbReference type="eggNOG" id="ENOG502RSNE">
    <property type="taxonomic scope" value="Eukaryota"/>
</dbReference>
<dbReference type="HOGENOM" id="CLU_311784_0_0_1"/>
<dbReference type="InParanoid" id="Q869W0"/>
<dbReference type="OMA" id="TYDSKMY"/>
<dbReference type="PRO" id="PR:Q869W0"/>
<dbReference type="Proteomes" id="UP000002195">
    <property type="component" value="Chromosome 2"/>
</dbReference>
<dbReference type="GO" id="GO:0005634">
    <property type="term" value="C:nucleus"/>
    <property type="evidence" value="ECO:0007669"/>
    <property type="project" value="UniProtKB-SubCell"/>
</dbReference>
<dbReference type="GO" id="GO:0000981">
    <property type="term" value="F:DNA-binding transcription factor activity, RNA polymerase II-specific"/>
    <property type="evidence" value="ECO:0000318"/>
    <property type="project" value="GO_Central"/>
</dbReference>
<dbReference type="GO" id="GO:0000978">
    <property type="term" value="F:RNA polymerase II cis-regulatory region sequence-specific DNA binding"/>
    <property type="evidence" value="ECO:0000318"/>
    <property type="project" value="GO_Central"/>
</dbReference>
<dbReference type="GO" id="GO:0006357">
    <property type="term" value="P:regulation of transcription by RNA polymerase II"/>
    <property type="evidence" value="ECO:0000318"/>
    <property type="project" value="GO_Central"/>
</dbReference>
<dbReference type="CDD" id="cd00086">
    <property type="entry name" value="homeodomain"/>
    <property type="match status" value="1"/>
</dbReference>
<dbReference type="Gene3D" id="1.10.10.60">
    <property type="entry name" value="Homeodomain-like"/>
    <property type="match status" value="1"/>
</dbReference>
<dbReference type="InterPro" id="IPR050460">
    <property type="entry name" value="Distal-less_Homeobox_TF"/>
</dbReference>
<dbReference type="InterPro" id="IPR001356">
    <property type="entry name" value="HD"/>
</dbReference>
<dbReference type="InterPro" id="IPR017970">
    <property type="entry name" value="Homeobox_CS"/>
</dbReference>
<dbReference type="InterPro" id="IPR009057">
    <property type="entry name" value="Homeodomain-like_sf"/>
</dbReference>
<dbReference type="PANTHER" id="PTHR24327:SF41">
    <property type="entry name" value="BRAIN-SPECIFIC HOMEOBOX PROTEIN"/>
    <property type="match status" value="1"/>
</dbReference>
<dbReference type="PANTHER" id="PTHR24327">
    <property type="entry name" value="HOMEOBOX PROTEIN"/>
    <property type="match status" value="1"/>
</dbReference>
<dbReference type="Pfam" id="PF00046">
    <property type="entry name" value="Homeodomain"/>
    <property type="match status" value="1"/>
</dbReference>
<dbReference type="SMART" id="SM00389">
    <property type="entry name" value="HOX"/>
    <property type="match status" value="1"/>
</dbReference>
<dbReference type="SUPFAM" id="SSF46689">
    <property type="entry name" value="Homeodomain-like"/>
    <property type="match status" value="1"/>
</dbReference>
<dbReference type="PROSITE" id="PS00027">
    <property type="entry name" value="HOMEOBOX_1"/>
    <property type="match status" value="1"/>
</dbReference>
<dbReference type="PROSITE" id="PS50071">
    <property type="entry name" value="HOMEOBOX_2"/>
    <property type="match status" value="1"/>
</dbReference>
<organism>
    <name type="scientific">Dictyostelium discoideum</name>
    <name type="common">Social amoeba</name>
    <dbReference type="NCBI Taxonomy" id="44689"/>
    <lineage>
        <taxon>Eukaryota</taxon>
        <taxon>Amoebozoa</taxon>
        <taxon>Evosea</taxon>
        <taxon>Eumycetozoa</taxon>
        <taxon>Dictyostelia</taxon>
        <taxon>Dictyosteliales</taxon>
        <taxon>Dictyosteliaceae</taxon>
        <taxon>Dictyostelium</taxon>
    </lineage>
</organism>
<keyword id="KW-0175">Coiled coil</keyword>
<keyword id="KW-0217">Developmental protein</keyword>
<keyword id="KW-0238">DNA-binding</keyword>
<keyword id="KW-0371">Homeobox</keyword>
<keyword id="KW-0539">Nucleus</keyword>
<keyword id="KW-1185">Reference proteome</keyword>
<keyword id="KW-0804">Transcription</keyword>
<keyword id="KW-0805">Transcription regulation</keyword>
<protein>
    <recommendedName>
        <fullName>Homeobox protein 2</fullName>
        <shortName>DdHbx-2</shortName>
    </recommendedName>
</protein>